<organism>
    <name type="scientific">Vibrio anguillarum</name>
    <name type="common">Listonella anguillarum</name>
    <dbReference type="NCBI Taxonomy" id="55601"/>
    <lineage>
        <taxon>Bacteria</taxon>
        <taxon>Pseudomonadati</taxon>
        <taxon>Pseudomonadota</taxon>
        <taxon>Gammaproteobacteria</taxon>
        <taxon>Vibrionales</taxon>
        <taxon>Vibrionaceae</taxon>
        <taxon>Vibrio</taxon>
    </lineage>
</organism>
<reference key="1">
    <citation type="journal article" date="1997" name="J. Bacteriol.">
        <title>Quorum sensing in Vibrio anguillarum: characterization of the vanI/vanR locus and identification of the autoinducer N-(3-oxodecanoyl)-L-homoserine lactone.</title>
        <authorList>
            <person name="Milton D.L."/>
            <person name="Hardman A."/>
            <person name="Camara M."/>
            <person name="Chhabra S.R."/>
            <person name="Bycroft B.W."/>
            <person name="Stewart G.S.A.B."/>
            <person name="Williams P."/>
        </authorList>
    </citation>
    <scope>NUCLEOTIDE SEQUENCE [GENOMIC DNA]</scope>
    <source>
        <strain>NB10 / Serotype O1</strain>
    </source>
</reference>
<keyword id="KW-0071">Autoinducer synthesis</keyword>
<keyword id="KW-0673">Quorum sensing</keyword>
<keyword id="KW-0949">S-adenosyl-L-methionine</keyword>
<keyword id="KW-0808">Transferase</keyword>
<name>VANI_VIBAN</name>
<sequence>MTISIYSHTFQSVPQADYVSLLKLRYKVFSQRLQWELKTNRGMETDEYDVPEAHYLYAKEEQGHLVGCWRILPTTSRYMLKDTFSELLGVQQAPKAKEIYELSRFAVDKDHSAQLGGVSNVTLQMFQSLYHHAQQYHINAYVTVTSASVEKLIKRMGIPCERLGDKKVHLLGSTRSVALHIPMNEAYRASVNA</sequence>
<gene>
    <name type="primary">vanI</name>
</gene>
<proteinExistence type="inferred from homology"/>
<accession>P74945</accession>
<feature type="chain" id="PRO_0000210901" description="Acyl-homoserine-lactone synthase">
    <location>
        <begin position="1"/>
        <end position="193"/>
    </location>
</feature>
<protein>
    <recommendedName>
        <fullName>Acyl-homoserine-lactone synthase</fullName>
        <ecNumber>2.3.1.184</ecNumber>
    </recommendedName>
    <alternativeName>
        <fullName>Autoinducer synthesis protein VanI</fullName>
    </alternativeName>
</protein>
<dbReference type="EC" id="2.3.1.184"/>
<dbReference type="EMBL" id="U69677">
    <property type="protein sequence ID" value="AAC45212.1"/>
    <property type="molecule type" value="Genomic_DNA"/>
</dbReference>
<dbReference type="RefSeq" id="WP_013868065.1">
    <property type="nucleotide sequence ID" value="NZ_VTYO01000022.1"/>
</dbReference>
<dbReference type="SMR" id="P74945"/>
<dbReference type="STRING" id="55601.AA407_14795"/>
<dbReference type="OMA" id="CWRLMPT"/>
<dbReference type="OrthoDB" id="6023281at2"/>
<dbReference type="GO" id="GO:0061579">
    <property type="term" value="F:N-acyl homoserine lactone synthase activity"/>
    <property type="evidence" value="ECO:0007669"/>
    <property type="project" value="UniProtKB-EC"/>
</dbReference>
<dbReference type="GO" id="GO:1901336">
    <property type="term" value="P:lactone biosynthetic process"/>
    <property type="evidence" value="ECO:0000315"/>
    <property type="project" value="CACAO"/>
</dbReference>
<dbReference type="GO" id="GO:0009372">
    <property type="term" value="P:quorum sensing"/>
    <property type="evidence" value="ECO:0007669"/>
    <property type="project" value="UniProtKB-KW"/>
</dbReference>
<dbReference type="GO" id="GO:0007165">
    <property type="term" value="P:signal transduction"/>
    <property type="evidence" value="ECO:0007669"/>
    <property type="project" value="TreeGrafter"/>
</dbReference>
<dbReference type="Gene3D" id="3.40.630.30">
    <property type="match status" value="1"/>
</dbReference>
<dbReference type="InterPro" id="IPR016181">
    <property type="entry name" value="Acyl_CoA_acyltransferase"/>
</dbReference>
<dbReference type="InterPro" id="IPR018311">
    <property type="entry name" value="Autoind_synth_CS"/>
</dbReference>
<dbReference type="InterPro" id="IPR001690">
    <property type="entry name" value="Autoind_synthase"/>
</dbReference>
<dbReference type="PANTHER" id="PTHR39322">
    <property type="entry name" value="ACYL-HOMOSERINE-LACTONE SYNTHASE"/>
    <property type="match status" value="1"/>
</dbReference>
<dbReference type="PANTHER" id="PTHR39322:SF1">
    <property type="entry name" value="ISOVALERYL-HOMOSERINE LACTONE SYNTHASE"/>
    <property type="match status" value="1"/>
</dbReference>
<dbReference type="Pfam" id="PF00765">
    <property type="entry name" value="Autoind_synth"/>
    <property type="match status" value="1"/>
</dbReference>
<dbReference type="PRINTS" id="PR01549">
    <property type="entry name" value="AUTOINDCRSYN"/>
</dbReference>
<dbReference type="SUPFAM" id="SSF55729">
    <property type="entry name" value="Acyl-CoA N-acyltransferases (Nat)"/>
    <property type="match status" value="1"/>
</dbReference>
<dbReference type="PROSITE" id="PS00949">
    <property type="entry name" value="AUTOINDUCER_SYNTH_1"/>
    <property type="match status" value="1"/>
</dbReference>
<dbReference type="PROSITE" id="PS51187">
    <property type="entry name" value="AUTOINDUCER_SYNTH_2"/>
    <property type="match status" value="1"/>
</dbReference>
<evidence type="ECO:0000255" key="1">
    <source>
        <dbReference type="PROSITE-ProRule" id="PRU00533"/>
    </source>
</evidence>
<comment type="function">
    <text>Required for the synthesis of N-(3-oxodecanoyl)-L-homoserine lactone (ODHL), an autoinducer molecule which binds to VanR.</text>
</comment>
<comment type="catalytic activity">
    <reaction>
        <text>a fatty acyl-[ACP] + S-adenosyl-L-methionine = an N-acyl-L-homoserine lactone + S-methyl-5'-thioadenosine + holo-[ACP] + H(+)</text>
        <dbReference type="Rhea" id="RHEA:10096"/>
        <dbReference type="Rhea" id="RHEA-COMP:9685"/>
        <dbReference type="Rhea" id="RHEA-COMP:14125"/>
        <dbReference type="ChEBI" id="CHEBI:15378"/>
        <dbReference type="ChEBI" id="CHEBI:17509"/>
        <dbReference type="ChEBI" id="CHEBI:55474"/>
        <dbReference type="ChEBI" id="CHEBI:59789"/>
        <dbReference type="ChEBI" id="CHEBI:64479"/>
        <dbReference type="ChEBI" id="CHEBI:138651"/>
        <dbReference type="EC" id="2.3.1.184"/>
    </reaction>
</comment>
<comment type="similarity">
    <text evidence="1">Belongs to the autoinducer synthase family.</text>
</comment>